<name>RK36_PHAAO</name>
<accession>Q3BAK3</accession>
<reference key="1">
    <citation type="journal article" date="2006" name="Mol. Biol. Evol.">
        <title>The chloroplast genome of Phalaenopsis aphrodite (Orchidaceae): comparative analysis of evolutionary rate with that of grasses and its phylogenetic implications.</title>
        <authorList>
            <person name="Chang C.-C."/>
            <person name="Lin H.-C."/>
            <person name="Lin I.-P."/>
            <person name="Chow T.-Y."/>
            <person name="Chen H.-H."/>
            <person name="Chen W.-H."/>
            <person name="Cheng C.-H."/>
            <person name="Lin C.-Y."/>
            <person name="Liu S.-M."/>
            <person name="Chang C.-C."/>
            <person name="Chaw S.-M."/>
        </authorList>
    </citation>
    <scope>NUCLEOTIDE SEQUENCE [LARGE SCALE GENOMIC DNA]</scope>
    <source>
        <strain>cv. Taisugar TS-97</strain>
    </source>
</reference>
<comment type="subcellular location">
    <subcellularLocation>
        <location>Plastid</location>
        <location>Chloroplast</location>
    </subcellularLocation>
</comment>
<comment type="similarity">
    <text evidence="1">Belongs to the bacterial ribosomal protein bL36 family.</text>
</comment>
<protein>
    <recommendedName>
        <fullName evidence="1">Large ribosomal subunit protein bL36c</fullName>
    </recommendedName>
    <alternativeName>
        <fullName evidence="2">50S ribosomal protein L36, chloroplastic</fullName>
    </alternativeName>
</protein>
<geneLocation type="chloroplast"/>
<organism>
    <name type="scientific">Phalaenopsis aphrodite subsp. formosana</name>
    <name type="common">Moth orchid</name>
    <dbReference type="NCBI Taxonomy" id="308872"/>
    <lineage>
        <taxon>Eukaryota</taxon>
        <taxon>Viridiplantae</taxon>
        <taxon>Streptophyta</taxon>
        <taxon>Embryophyta</taxon>
        <taxon>Tracheophyta</taxon>
        <taxon>Spermatophyta</taxon>
        <taxon>Magnoliopsida</taxon>
        <taxon>Liliopsida</taxon>
        <taxon>Asparagales</taxon>
        <taxon>Orchidaceae</taxon>
        <taxon>Epidendroideae</taxon>
        <taxon>Vandeae</taxon>
        <taxon>Aeridinae</taxon>
        <taxon>Phalaenopsis</taxon>
    </lineage>
</organism>
<keyword id="KW-0150">Chloroplast</keyword>
<keyword id="KW-0934">Plastid</keyword>
<keyword id="KW-0687">Ribonucleoprotein</keyword>
<keyword id="KW-0689">Ribosomal protein</keyword>
<evidence type="ECO:0000255" key="1">
    <source>
        <dbReference type="HAMAP-Rule" id="MF_00251"/>
    </source>
</evidence>
<evidence type="ECO:0000305" key="2"/>
<sequence>MKIRASVRKICEKCRLIRRQGRIIVICSNPRHKQRQG</sequence>
<dbReference type="EMBL" id="AY916449">
    <property type="protein sequence ID" value="AAW82533.1"/>
    <property type="molecule type" value="Genomic_DNA"/>
</dbReference>
<dbReference type="RefSeq" id="YP_358615.1">
    <property type="nucleotide sequence ID" value="NC_007499.1"/>
</dbReference>
<dbReference type="SMR" id="Q3BAK3"/>
<dbReference type="GeneID" id="3741714"/>
<dbReference type="GO" id="GO:0009507">
    <property type="term" value="C:chloroplast"/>
    <property type="evidence" value="ECO:0007669"/>
    <property type="project" value="UniProtKB-SubCell"/>
</dbReference>
<dbReference type="GO" id="GO:1990904">
    <property type="term" value="C:ribonucleoprotein complex"/>
    <property type="evidence" value="ECO:0007669"/>
    <property type="project" value="UniProtKB-KW"/>
</dbReference>
<dbReference type="GO" id="GO:0005840">
    <property type="term" value="C:ribosome"/>
    <property type="evidence" value="ECO:0007669"/>
    <property type="project" value="UniProtKB-KW"/>
</dbReference>
<dbReference type="GO" id="GO:0003735">
    <property type="term" value="F:structural constituent of ribosome"/>
    <property type="evidence" value="ECO:0007669"/>
    <property type="project" value="InterPro"/>
</dbReference>
<dbReference type="GO" id="GO:0006412">
    <property type="term" value="P:translation"/>
    <property type="evidence" value="ECO:0007669"/>
    <property type="project" value="UniProtKB-UniRule"/>
</dbReference>
<dbReference type="HAMAP" id="MF_00251">
    <property type="entry name" value="Ribosomal_bL36"/>
    <property type="match status" value="1"/>
</dbReference>
<dbReference type="InterPro" id="IPR000473">
    <property type="entry name" value="Ribosomal_bL36"/>
</dbReference>
<dbReference type="InterPro" id="IPR035977">
    <property type="entry name" value="Ribosomal_bL36_sp"/>
</dbReference>
<dbReference type="NCBIfam" id="TIGR01022">
    <property type="entry name" value="rpmJ_bact"/>
    <property type="match status" value="1"/>
</dbReference>
<dbReference type="PANTHER" id="PTHR42888">
    <property type="entry name" value="50S RIBOSOMAL PROTEIN L36, CHLOROPLASTIC"/>
    <property type="match status" value="1"/>
</dbReference>
<dbReference type="PANTHER" id="PTHR42888:SF1">
    <property type="entry name" value="LARGE RIBOSOMAL SUBUNIT PROTEIN BL36C"/>
    <property type="match status" value="1"/>
</dbReference>
<dbReference type="Pfam" id="PF00444">
    <property type="entry name" value="Ribosomal_L36"/>
    <property type="match status" value="1"/>
</dbReference>
<dbReference type="SUPFAM" id="SSF57840">
    <property type="entry name" value="Ribosomal protein L36"/>
    <property type="match status" value="1"/>
</dbReference>
<dbReference type="PROSITE" id="PS00828">
    <property type="entry name" value="RIBOSOMAL_L36"/>
    <property type="match status" value="1"/>
</dbReference>
<gene>
    <name evidence="1" type="primary">rpl36</name>
</gene>
<proteinExistence type="inferred from homology"/>
<feature type="chain" id="PRO_0000276829" description="Large ribosomal subunit protein bL36c">
    <location>
        <begin position="1"/>
        <end position="37"/>
    </location>
</feature>